<feature type="chain" id="PRO_0000162868" description="Thiazole synthase">
    <location>
        <begin position="1"/>
        <end position="268"/>
    </location>
</feature>
<feature type="region of interest" description="Disordered" evidence="2">
    <location>
        <begin position="238"/>
        <end position="268"/>
    </location>
</feature>
<feature type="compositionally biased region" description="Pro residues" evidence="2">
    <location>
        <begin position="258"/>
        <end position="268"/>
    </location>
</feature>
<feature type="active site" description="Schiff-base intermediate with DXP" evidence="1">
    <location>
        <position position="96"/>
    </location>
</feature>
<feature type="binding site" evidence="1">
    <location>
        <position position="157"/>
    </location>
    <ligand>
        <name>1-deoxy-D-xylulose 5-phosphate</name>
        <dbReference type="ChEBI" id="CHEBI:57792"/>
    </ligand>
</feature>
<feature type="binding site" evidence="1">
    <location>
        <begin position="185"/>
        <end position="186"/>
    </location>
    <ligand>
        <name>1-deoxy-D-xylulose 5-phosphate</name>
        <dbReference type="ChEBI" id="CHEBI:57792"/>
    </ligand>
</feature>
<feature type="binding site" evidence="1">
    <location>
        <begin position="207"/>
        <end position="208"/>
    </location>
    <ligand>
        <name>1-deoxy-D-xylulose 5-phosphate</name>
        <dbReference type="ChEBI" id="CHEBI:57792"/>
    </ligand>
</feature>
<evidence type="ECO:0000255" key="1">
    <source>
        <dbReference type="HAMAP-Rule" id="MF_00443"/>
    </source>
</evidence>
<evidence type="ECO:0000256" key="2">
    <source>
        <dbReference type="SAM" id="MobiDB-lite"/>
    </source>
</evidence>
<reference key="1">
    <citation type="journal article" date="2004" name="Nat. Biotechnol.">
        <title>The genome sequence of the extreme thermophile Thermus thermophilus.</title>
        <authorList>
            <person name="Henne A."/>
            <person name="Brueggemann H."/>
            <person name="Raasch C."/>
            <person name="Wiezer A."/>
            <person name="Hartsch T."/>
            <person name="Liesegang H."/>
            <person name="Johann A."/>
            <person name="Lienard T."/>
            <person name="Gohl O."/>
            <person name="Martinez-Arias R."/>
            <person name="Jacobi C."/>
            <person name="Starkuviene V."/>
            <person name="Schlenczeck S."/>
            <person name="Dencker S."/>
            <person name="Huber R."/>
            <person name="Klenk H.-P."/>
            <person name="Kramer W."/>
            <person name="Merkl R."/>
            <person name="Gottschalk G."/>
            <person name="Fritz H.-J."/>
        </authorList>
    </citation>
    <scope>NUCLEOTIDE SEQUENCE [LARGE SCALE GENOMIC DNA]</scope>
    <source>
        <strain>ATCC BAA-163 / DSM 7039 / HB27</strain>
    </source>
</reference>
<proteinExistence type="inferred from homology"/>
<gene>
    <name evidence="1" type="primary">thiG</name>
    <name type="ordered locus">TT_C0317</name>
</gene>
<comment type="function">
    <text evidence="1">Catalyzes the rearrangement of 1-deoxy-D-xylulose 5-phosphate (DXP) to produce the thiazole phosphate moiety of thiamine. Sulfur is provided by the thiocarboxylate moiety of the carrier protein ThiS. In vitro, sulfur can be provided by H(2)S.</text>
</comment>
<comment type="catalytic activity">
    <reaction evidence="1">
        <text>[ThiS sulfur-carrier protein]-C-terminal-Gly-aminoethanethioate + 2-iminoacetate + 1-deoxy-D-xylulose 5-phosphate = [ThiS sulfur-carrier protein]-C-terminal Gly-Gly + 2-[(2R,5Z)-2-carboxy-4-methylthiazol-5(2H)-ylidene]ethyl phosphate + 2 H2O + H(+)</text>
        <dbReference type="Rhea" id="RHEA:26297"/>
        <dbReference type="Rhea" id="RHEA-COMP:12909"/>
        <dbReference type="Rhea" id="RHEA-COMP:19908"/>
        <dbReference type="ChEBI" id="CHEBI:15377"/>
        <dbReference type="ChEBI" id="CHEBI:15378"/>
        <dbReference type="ChEBI" id="CHEBI:57792"/>
        <dbReference type="ChEBI" id="CHEBI:62899"/>
        <dbReference type="ChEBI" id="CHEBI:77846"/>
        <dbReference type="ChEBI" id="CHEBI:90778"/>
        <dbReference type="ChEBI" id="CHEBI:232372"/>
        <dbReference type="EC" id="2.8.1.10"/>
    </reaction>
</comment>
<comment type="pathway">
    <text evidence="1">Cofactor biosynthesis; thiamine diphosphate biosynthesis.</text>
</comment>
<comment type="subunit">
    <text evidence="1">Homotetramer. Forms heterodimers with either ThiH or ThiS.</text>
</comment>
<comment type="subcellular location">
    <subcellularLocation>
        <location evidence="1">Cytoplasm</location>
    </subcellularLocation>
</comment>
<comment type="similarity">
    <text evidence="1">Belongs to the ThiG family.</text>
</comment>
<sequence>MDTWKVGPVELKSRLILGSGKYKDFGVMREAIAAAKAEVVTVSIRRVELKAPGHVGLLEALEGVRLLPNTAGARTAEEAVRLARLGRLLTGERWVKLEVIPDPTYLLPDPLETLKAAERLIEEDFLVLPYMGPDLVLAKRLAALGTATVMPLAAPIGSGWGVRTRALLELFAREKASLPPVVVDAGLGLPSHAAEVMELGLDAVLVNTAIAEAQDPPAMAEAFRLAVEAGRKAYLAGPMRPREAASPSSPVEGVPFTPTGPRPGRGPQ</sequence>
<accession>Q72KN9</accession>
<name>THIG_THET2</name>
<dbReference type="EC" id="2.8.1.10" evidence="1"/>
<dbReference type="EMBL" id="AE017221">
    <property type="protein sequence ID" value="AAS80665.1"/>
    <property type="molecule type" value="Genomic_DNA"/>
</dbReference>
<dbReference type="RefSeq" id="WP_011172768.1">
    <property type="nucleotide sequence ID" value="NC_005835.1"/>
</dbReference>
<dbReference type="SMR" id="Q72KN9"/>
<dbReference type="KEGG" id="tth:TT_C0317"/>
<dbReference type="eggNOG" id="COG2022">
    <property type="taxonomic scope" value="Bacteria"/>
</dbReference>
<dbReference type="HOGENOM" id="CLU_062233_1_0_0"/>
<dbReference type="OrthoDB" id="9805935at2"/>
<dbReference type="UniPathway" id="UPA00060"/>
<dbReference type="Proteomes" id="UP000000592">
    <property type="component" value="Chromosome"/>
</dbReference>
<dbReference type="GO" id="GO:0005737">
    <property type="term" value="C:cytoplasm"/>
    <property type="evidence" value="ECO:0007669"/>
    <property type="project" value="UniProtKB-SubCell"/>
</dbReference>
<dbReference type="GO" id="GO:1990107">
    <property type="term" value="F:thiazole synthase activity"/>
    <property type="evidence" value="ECO:0007669"/>
    <property type="project" value="UniProtKB-EC"/>
</dbReference>
<dbReference type="GO" id="GO:0009229">
    <property type="term" value="P:thiamine diphosphate biosynthetic process"/>
    <property type="evidence" value="ECO:0007669"/>
    <property type="project" value="UniProtKB-UniRule"/>
</dbReference>
<dbReference type="CDD" id="cd04728">
    <property type="entry name" value="ThiG"/>
    <property type="match status" value="1"/>
</dbReference>
<dbReference type="Gene3D" id="3.20.20.70">
    <property type="entry name" value="Aldolase class I"/>
    <property type="match status" value="1"/>
</dbReference>
<dbReference type="HAMAP" id="MF_00443">
    <property type="entry name" value="ThiG"/>
    <property type="match status" value="1"/>
</dbReference>
<dbReference type="InterPro" id="IPR013785">
    <property type="entry name" value="Aldolase_TIM"/>
</dbReference>
<dbReference type="InterPro" id="IPR033983">
    <property type="entry name" value="Thiazole_synthase_ThiG"/>
</dbReference>
<dbReference type="InterPro" id="IPR008867">
    <property type="entry name" value="ThiG"/>
</dbReference>
<dbReference type="PANTHER" id="PTHR34266">
    <property type="entry name" value="THIAZOLE SYNTHASE"/>
    <property type="match status" value="1"/>
</dbReference>
<dbReference type="PANTHER" id="PTHR34266:SF2">
    <property type="entry name" value="THIAZOLE SYNTHASE"/>
    <property type="match status" value="1"/>
</dbReference>
<dbReference type="Pfam" id="PF05690">
    <property type="entry name" value="ThiG"/>
    <property type="match status" value="1"/>
</dbReference>
<dbReference type="SUPFAM" id="SSF110399">
    <property type="entry name" value="ThiG-like"/>
    <property type="match status" value="1"/>
</dbReference>
<protein>
    <recommendedName>
        <fullName evidence="1">Thiazole synthase</fullName>
        <ecNumber evidence="1">2.8.1.10</ecNumber>
    </recommendedName>
</protein>
<keyword id="KW-0963">Cytoplasm</keyword>
<keyword id="KW-0704">Schiff base</keyword>
<keyword id="KW-0784">Thiamine biosynthesis</keyword>
<keyword id="KW-0808">Transferase</keyword>
<organism>
    <name type="scientific">Thermus thermophilus (strain ATCC BAA-163 / DSM 7039 / HB27)</name>
    <dbReference type="NCBI Taxonomy" id="262724"/>
    <lineage>
        <taxon>Bacteria</taxon>
        <taxon>Thermotogati</taxon>
        <taxon>Deinococcota</taxon>
        <taxon>Deinococci</taxon>
        <taxon>Thermales</taxon>
        <taxon>Thermaceae</taxon>
        <taxon>Thermus</taxon>
    </lineage>
</organism>